<comment type="function">
    <text evidence="1">Could be involved in insertion of integral membrane proteins into the membrane.</text>
</comment>
<comment type="subcellular location">
    <subcellularLocation>
        <location evidence="1">Cell inner membrane</location>
        <topology evidence="1">Peripheral membrane protein</topology>
        <orientation evidence="1">Cytoplasmic side</orientation>
    </subcellularLocation>
</comment>
<comment type="similarity">
    <text evidence="1">Belongs to the UPF0161 family.</text>
</comment>
<feature type="chain" id="PRO_0000253071" description="Putative membrane protein insertion efficiency factor">
    <location>
        <begin position="1"/>
        <end position="76"/>
    </location>
</feature>
<keyword id="KW-0997">Cell inner membrane</keyword>
<keyword id="KW-1003">Cell membrane</keyword>
<keyword id="KW-0472">Membrane</keyword>
<keyword id="KW-1185">Reference proteome</keyword>
<gene>
    <name type="ordered locus">Adeh_4359</name>
</gene>
<protein>
    <recommendedName>
        <fullName evidence="1">Putative membrane protein insertion efficiency factor</fullName>
    </recommendedName>
</protein>
<accession>Q2IHR6</accession>
<name>YIDD_ANADE</name>
<evidence type="ECO:0000255" key="1">
    <source>
        <dbReference type="HAMAP-Rule" id="MF_00386"/>
    </source>
</evidence>
<reference key="1">
    <citation type="submission" date="2006-01" db="EMBL/GenBank/DDBJ databases">
        <title>Complete sequence of Anaeromyxobacter dehalogenans 2CP-C.</title>
        <authorList>
            <person name="Copeland A."/>
            <person name="Lucas S."/>
            <person name="Lapidus A."/>
            <person name="Barry K."/>
            <person name="Detter J.C."/>
            <person name="Glavina T."/>
            <person name="Hammon N."/>
            <person name="Israni S."/>
            <person name="Pitluck S."/>
            <person name="Brettin T."/>
            <person name="Bruce D."/>
            <person name="Han C."/>
            <person name="Tapia R."/>
            <person name="Gilna P."/>
            <person name="Kiss H."/>
            <person name="Schmutz J."/>
            <person name="Larimer F."/>
            <person name="Land M."/>
            <person name="Kyrpides N."/>
            <person name="Anderson I."/>
            <person name="Sanford R.A."/>
            <person name="Ritalahti K.M."/>
            <person name="Thomas H.S."/>
            <person name="Kirby J.R."/>
            <person name="Zhulin I.B."/>
            <person name="Loeffler F.E."/>
            <person name="Richardson P."/>
        </authorList>
    </citation>
    <scope>NUCLEOTIDE SEQUENCE [LARGE SCALE GENOMIC DNA]</scope>
    <source>
        <strain>2CP-C</strain>
    </source>
</reference>
<sequence length="76" mass="8635">MIRRALVLLVRIYQRLVSPLLPPACRFYPSCSAYAVTALQRHGALRGSWLTVRRLCRCHPFHPGGVDPVPELTPKR</sequence>
<organism>
    <name type="scientific">Anaeromyxobacter dehalogenans (strain 2CP-C)</name>
    <dbReference type="NCBI Taxonomy" id="290397"/>
    <lineage>
        <taxon>Bacteria</taxon>
        <taxon>Pseudomonadati</taxon>
        <taxon>Myxococcota</taxon>
        <taxon>Myxococcia</taxon>
        <taxon>Myxococcales</taxon>
        <taxon>Cystobacterineae</taxon>
        <taxon>Anaeromyxobacteraceae</taxon>
        <taxon>Anaeromyxobacter</taxon>
    </lineage>
</organism>
<proteinExistence type="inferred from homology"/>
<dbReference type="EMBL" id="CP000251">
    <property type="protein sequence ID" value="ABC84122.1"/>
    <property type="molecule type" value="Genomic_DNA"/>
</dbReference>
<dbReference type="RefSeq" id="WP_011423404.1">
    <property type="nucleotide sequence ID" value="NC_007760.1"/>
</dbReference>
<dbReference type="STRING" id="290397.Adeh_4359"/>
<dbReference type="KEGG" id="ade:Adeh_4359"/>
<dbReference type="eggNOG" id="COG0759">
    <property type="taxonomic scope" value="Bacteria"/>
</dbReference>
<dbReference type="HOGENOM" id="CLU_144811_6_0_7"/>
<dbReference type="OrthoDB" id="9801753at2"/>
<dbReference type="Proteomes" id="UP000001935">
    <property type="component" value="Chromosome"/>
</dbReference>
<dbReference type="GO" id="GO:0005886">
    <property type="term" value="C:plasma membrane"/>
    <property type="evidence" value="ECO:0007669"/>
    <property type="project" value="UniProtKB-SubCell"/>
</dbReference>
<dbReference type="HAMAP" id="MF_00386">
    <property type="entry name" value="UPF0161_YidD"/>
    <property type="match status" value="1"/>
</dbReference>
<dbReference type="InterPro" id="IPR002696">
    <property type="entry name" value="Membr_insert_effic_factor_YidD"/>
</dbReference>
<dbReference type="NCBIfam" id="TIGR00278">
    <property type="entry name" value="membrane protein insertion efficiency factor YidD"/>
    <property type="match status" value="1"/>
</dbReference>
<dbReference type="PANTHER" id="PTHR33383">
    <property type="entry name" value="MEMBRANE PROTEIN INSERTION EFFICIENCY FACTOR-RELATED"/>
    <property type="match status" value="1"/>
</dbReference>
<dbReference type="PANTHER" id="PTHR33383:SF1">
    <property type="entry name" value="MEMBRANE PROTEIN INSERTION EFFICIENCY FACTOR-RELATED"/>
    <property type="match status" value="1"/>
</dbReference>
<dbReference type="Pfam" id="PF01809">
    <property type="entry name" value="YidD"/>
    <property type="match status" value="1"/>
</dbReference>
<dbReference type="SMART" id="SM01234">
    <property type="entry name" value="Haemolytic"/>
    <property type="match status" value="1"/>
</dbReference>